<accession>Q87BK9</accession>
<evidence type="ECO:0000255" key="1">
    <source>
        <dbReference type="HAMAP-Rule" id="MF_00205"/>
    </source>
</evidence>
<gene>
    <name evidence="1" type="primary">uvrA</name>
    <name type="ordered locus">PD_1444</name>
</gene>
<protein>
    <recommendedName>
        <fullName evidence="1">UvrABC system protein A</fullName>
        <shortName evidence="1">UvrA protein</shortName>
    </recommendedName>
    <alternativeName>
        <fullName evidence="1">Excinuclease ABC subunit A</fullName>
    </alternativeName>
</protein>
<reference key="1">
    <citation type="journal article" date="2003" name="J. Bacteriol.">
        <title>Comparative analyses of the complete genome sequences of Pierce's disease and citrus variegated chlorosis strains of Xylella fastidiosa.</title>
        <authorList>
            <person name="Van Sluys M.A."/>
            <person name="de Oliveira M.C."/>
            <person name="Monteiro-Vitorello C.B."/>
            <person name="Miyaki C.Y."/>
            <person name="Furlan L.R."/>
            <person name="Camargo L.E.A."/>
            <person name="da Silva A.C.R."/>
            <person name="Moon D.H."/>
            <person name="Takita M.A."/>
            <person name="Lemos E.G.M."/>
            <person name="Machado M.A."/>
            <person name="Ferro M.I.T."/>
            <person name="da Silva F.R."/>
            <person name="Goldman M.H.S."/>
            <person name="Goldman G.H."/>
            <person name="Lemos M.V.F."/>
            <person name="El-Dorry H."/>
            <person name="Tsai S.M."/>
            <person name="Carrer H."/>
            <person name="Carraro D.M."/>
            <person name="de Oliveira R.C."/>
            <person name="Nunes L.R."/>
            <person name="Siqueira W.J."/>
            <person name="Coutinho L.L."/>
            <person name="Kimura E.T."/>
            <person name="Ferro E.S."/>
            <person name="Harakava R."/>
            <person name="Kuramae E.E."/>
            <person name="Marino C.L."/>
            <person name="Giglioti E."/>
            <person name="Abreu I.L."/>
            <person name="Alves L.M.C."/>
            <person name="do Amaral A.M."/>
            <person name="Baia G.S."/>
            <person name="Blanco S.R."/>
            <person name="Brito M.S."/>
            <person name="Cannavan F.S."/>
            <person name="Celestino A.V."/>
            <person name="da Cunha A.F."/>
            <person name="Fenille R.C."/>
            <person name="Ferro J.A."/>
            <person name="Formighieri E.F."/>
            <person name="Kishi L.T."/>
            <person name="Leoni S.G."/>
            <person name="Oliveira A.R."/>
            <person name="Rosa V.E. Jr."/>
            <person name="Sassaki F.T."/>
            <person name="Sena J.A.D."/>
            <person name="de Souza A.A."/>
            <person name="Truffi D."/>
            <person name="Tsukumo F."/>
            <person name="Yanai G.M."/>
            <person name="Zaros L.G."/>
            <person name="Civerolo E.L."/>
            <person name="Simpson A.J.G."/>
            <person name="Almeida N.F. Jr."/>
            <person name="Setubal J.C."/>
            <person name="Kitajima J.P."/>
        </authorList>
    </citation>
    <scope>NUCLEOTIDE SEQUENCE [LARGE SCALE GENOMIC DNA]</scope>
    <source>
        <strain>Temecula1 / ATCC 700964</strain>
    </source>
</reference>
<organism>
    <name type="scientific">Xylella fastidiosa (strain Temecula1 / ATCC 700964)</name>
    <dbReference type="NCBI Taxonomy" id="183190"/>
    <lineage>
        <taxon>Bacteria</taxon>
        <taxon>Pseudomonadati</taxon>
        <taxon>Pseudomonadota</taxon>
        <taxon>Gammaproteobacteria</taxon>
        <taxon>Lysobacterales</taxon>
        <taxon>Lysobacteraceae</taxon>
        <taxon>Xylella</taxon>
    </lineage>
</organism>
<name>UVRA_XYLFT</name>
<dbReference type="EMBL" id="AE009442">
    <property type="protein sequence ID" value="AAO29288.1"/>
    <property type="molecule type" value="Genomic_DNA"/>
</dbReference>
<dbReference type="RefSeq" id="WP_004088411.1">
    <property type="nucleotide sequence ID" value="NC_004556.1"/>
</dbReference>
<dbReference type="SMR" id="Q87BK9"/>
<dbReference type="GeneID" id="93905265"/>
<dbReference type="KEGG" id="xft:PD_1444"/>
<dbReference type="HOGENOM" id="CLU_001370_0_0_6"/>
<dbReference type="Proteomes" id="UP000002516">
    <property type="component" value="Chromosome"/>
</dbReference>
<dbReference type="GO" id="GO:0005737">
    <property type="term" value="C:cytoplasm"/>
    <property type="evidence" value="ECO:0007669"/>
    <property type="project" value="UniProtKB-SubCell"/>
</dbReference>
<dbReference type="GO" id="GO:0009380">
    <property type="term" value="C:excinuclease repair complex"/>
    <property type="evidence" value="ECO:0007669"/>
    <property type="project" value="InterPro"/>
</dbReference>
<dbReference type="GO" id="GO:0005524">
    <property type="term" value="F:ATP binding"/>
    <property type="evidence" value="ECO:0007669"/>
    <property type="project" value="UniProtKB-UniRule"/>
</dbReference>
<dbReference type="GO" id="GO:0016887">
    <property type="term" value="F:ATP hydrolysis activity"/>
    <property type="evidence" value="ECO:0007669"/>
    <property type="project" value="InterPro"/>
</dbReference>
<dbReference type="GO" id="GO:0003677">
    <property type="term" value="F:DNA binding"/>
    <property type="evidence" value="ECO:0007669"/>
    <property type="project" value="UniProtKB-UniRule"/>
</dbReference>
<dbReference type="GO" id="GO:0009381">
    <property type="term" value="F:excinuclease ABC activity"/>
    <property type="evidence" value="ECO:0007669"/>
    <property type="project" value="UniProtKB-UniRule"/>
</dbReference>
<dbReference type="GO" id="GO:0008270">
    <property type="term" value="F:zinc ion binding"/>
    <property type="evidence" value="ECO:0007669"/>
    <property type="project" value="UniProtKB-UniRule"/>
</dbReference>
<dbReference type="GO" id="GO:0006289">
    <property type="term" value="P:nucleotide-excision repair"/>
    <property type="evidence" value="ECO:0007669"/>
    <property type="project" value="UniProtKB-UniRule"/>
</dbReference>
<dbReference type="GO" id="GO:0009432">
    <property type="term" value="P:SOS response"/>
    <property type="evidence" value="ECO:0007669"/>
    <property type="project" value="UniProtKB-UniRule"/>
</dbReference>
<dbReference type="CDD" id="cd03270">
    <property type="entry name" value="ABC_UvrA_I"/>
    <property type="match status" value="1"/>
</dbReference>
<dbReference type="CDD" id="cd03271">
    <property type="entry name" value="ABC_UvrA_II"/>
    <property type="match status" value="1"/>
</dbReference>
<dbReference type="FunFam" id="1.10.8.280:FF:000001">
    <property type="entry name" value="UvrABC system protein A"/>
    <property type="match status" value="1"/>
</dbReference>
<dbReference type="FunFam" id="1.20.1580.10:FF:000002">
    <property type="entry name" value="UvrABC system protein A"/>
    <property type="match status" value="1"/>
</dbReference>
<dbReference type="FunFam" id="3.40.50.300:FF:000028">
    <property type="entry name" value="UvrABC system protein A"/>
    <property type="match status" value="1"/>
</dbReference>
<dbReference type="Gene3D" id="1.10.8.280">
    <property type="entry name" value="ABC transporter ATPase domain-like"/>
    <property type="match status" value="1"/>
</dbReference>
<dbReference type="Gene3D" id="1.20.1580.10">
    <property type="entry name" value="ABC transporter ATPase like domain"/>
    <property type="match status" value="2"/>
</dbReference>
<dbReference type="Gene3D" id="3.30.1490.20">
    <property type="entry name" value="ATP-grasp fold, A domain"/>
    <property type="match status" value="1"/>
</dbReference>
<dbReference type="Gene3D" id="3.40.50.300">
    <property type="entry name" value="P-loop containing nucleotide triphosphate hydrolases"/>
    <property type="match status" value="2"/>
</dbReference>
<dbReference type="HAMAP" id="MF_00205">
    <property type="entry name" value="UvrA"/>
    <property type="match status" value="1"/>
</dbReference>
<dbReference type="InterPro" id="IPR003439">
    <property type="entry name" value="ABC_transporter-like_ATP-bd"/>
</dbReference>
<dbReference type="InterPro" id="IPR017871">
    <property type="entry name" value="ABC_transporter-like_CS"/>
</dbReference>
<dbReference type="InterPro" id="IPR013815">
    <property type="entry name" value="ATP_grasp_subdomain_1"/>
</dbReference>
<dbReference type="InterPro" id="IPR027417">
    <property type="entry name" value="P-loop_NTPase"/>
</dbReference>
<dbReference type="InterPro" id="IPR004602">
    <property type="entry name" value="UvrA"/>
</dbReference>
<dbReference type="InterPro" id="IPR041552">
    <property type="entry name" value="UvrA_DNA-bd"/>
</dbReference>
<dbReference type="InterPro" id="IPR041102">
    <property type="entry name" value="UvrA_inter"/>
</dbReference>
<dbReference type="NCBIfam" id="NF001503">
    <property type="entry name" value="PRK00349.1"/>
    <property type="match status" value="1"/>
</dbReference>
<dbReference type="NCBIfam" id="TIGR00630">
    <property type="entry name" value="uvra"/>
    <property type="match status" value="1"/>
</dbReference>
<dbReference type="PANTHER" id="PTHR43152">
    <property type="entry name" value="UVRABC SYSTEM PROTEIN A"/>
    <property type="match status" value="1"/>
</dbReference>
<dbReference type="PANTHER" id="PTHR43152:SF3">
    <property type="entry name" value="UVRABC SYSTEM PROTEIN A"/>
    <property type="match status" value="1"/>
</dbReference>
<dbReference type="Pfam" id="PF17755">
    <property type="entry name" value="UvrA_DNA-bind"/>
    <property type="match status" value="1"/>
</dbReference>
<dbReference type="Pfam" id="PF17760">
    <property type="entry name" value="UvrA_inter"/>
    <property type="match status" value="1"/>
</dbReference>
<dbReference type="SUPFAM" id="SSF52540">
    <property type="entry name" value="P-loop containing nucleoside triphosphate hydrolases"/>
    <property type="match status" value="2"/>
</dbReference>
<dbReference type="PROSITE" id="PS00211">
    <property type="entry name" value="ABC_TRANSPORTER_1"/>
    <property type="match status" value="2"/>
</dbReference>
<dbReference type="PROSITE" id="PS50893">
    <property type="entry name" value="ABC_TRANSPORTER_2"/>
    <property type="match status" value="2"/>
</dbReference>
<sequence length="965" mass="106939">MTALIRIRGARTHNLKNLDLDLPRNTLIVITGLSGSGKSSLAFDTIYAEGQRRYVESLSAYARQFLSVMEKPDVDHIEGLSPAISIEQKSTSHNPRSTVGTITEIYDYLRLLYARVGQPRCPEHHYPLEAQTVSQMVDHVLTLDPEQRYMLLAPVVRERKGEHTQVFEQLRAQGFVRVRVDGELYEIDAVPTLTLRQKHTIEAVIDRFRPREDIKQRLAESFETALKLGNGMASVQTLDTTTATPHLFSSKYSCPVCDYSLPELEPRLFSFNAPMGACPACNGLGVTEFFDPAKVVIHPDLSLSAGAVRGWDRRNAYYFQLIASLAKHYTFDIDASWESLPEEIRHTILFGSGDEQINFTYLTEAGGRTKRKHRFEGIVPNLERRYRETESAAVREELAKYVSTRTCPECGGTRLNRAARNVFVADRTLPELTVLPINDALEFFKTLRLSGWRGEIAIKIVKEIGERLGFLVDVGLDYLTLERKADTLSGGEAQRIRLASQIGAGLVGVMYVLDEPSIGLHQRDNERLLGTLTRLRDLGNTVIVVEHDEDAIRQADHILDIGPGAGVHGGEICAQGSLEQIMAAPRSLTGQYLSGRRRIEIPKQRHPPNATKMLHLRGACGNNLKGVNLDIPEGLFTCITGVSGSGKSTLINDTLFTLAANEINGASHPIAPYASVDGLELFDKVVDIDQSPIGRTPRSNPATYTGMFTPLRELFAQVPEARARGYSPGRFSFNVRGGRCEACEGDGLIKVEMHFLPDVYVPCDICHGKRYNRETLEIRYKGYNINDVLEMTVEDALKLFEAVPAIARKLETLVDVGLSYLKLGQSATTLSGGEAQRVKLSKELSRRDTGHTLYILDEPTTGLHFYDIEALLAVMHKLRDAGNTVIVIEHNLDVIKTADWVIDLGPEGGGRGGEILVAGTPETVAAHPHSHTGHFLAKLLPPKDVSNCGHRNPKEEVDIAKTVHR</sequence>
<keyword id="KW-0067">ATP-binding</keyword>
<keyword id="KW-0963">Cytoplasm</keyword>
<keyword id="KW-0227">DNA damage</keyword>
<keyword id="KW-0228">DNA excision</keyword>
<keyword id="KW-0234">DNA repair</keyword>
<keyword id="KW-0238">DNA-binding</keyword>
<keyword id="KW-0267">Excision nuclease</keyword>
<keyword id="KW-0479">Metal-binding</keyword>
<keyword id="KW-0547">Nucleotide-binding</keyword>
<keyword id="KW-1185">Reference proteome</keyword>
<keyword id="KW-0677">Repeat</keyword>
<keyword id="KW-0742">SOS response</keyword>
<keyword id="KW-0862">Zinc</keyword>
<keyword id="KW-0863">Zinc-finger</keyword>
<feature type="chain" id="PRO_0000093119" description="UvrABC system protein A">
    <location>
        <begin position="1"/>
        <end position="965"/>
    </location>
</feature>
<feature type="domain" description="ABC transporter 1" evidence="1">
    <location>
        <begin position="311"/>
        <end position="588"/>
    </location>
</feature>
<feature type="domain" description="ABC transporter 2" evidence="1">
    <location>
        <begin position="608"/>
        <end position="937"/>
    </location>
</feature>
<feature type="zinc finger region" description="C4-type" evidence="1">
    <location>
        <begin position="254"/>
        <end position="281"/>
    </location>
</feature>
<feature type="zinc finger region" description="C4-type" evidence="1">
    <location>
        <begin position="740"/>
        <end position="766"/>
    </location>
</feature>
<feature type="binding site" evidence="1">
    <location>
        <begin position="32"/>
        <end position="39"/>
    </location>
    <ligand>
        <name>ATP</name>
        <dbReference type="ChEBI" id="CHEBI:30616"/>
    </ligand>
</feature>
<feature type="binding site" evidence="1">
    <location>
        <begin position="641"/>
        <end position="648"/>
    </location>
    <ligand>
        <name>ATP</name>
        <dbReference type="ChEBI" id="CHEBI:30616"/>
    </ligand>
</feature>
<proteinExistence type="inferred from homology"/>
<comment type="function">
    <text evidence="1">The UvrABC repair system catalyzes the recognition and processing of DNA lesions. UvrA is an ATPase and a DNA-binding protein. A damage recognition complex composed of 2 UvrA and 2 UvrB subunits scans DNA for abnormalities. When the presence of a lesion has been verified by UvrB, the UvrA molecules dissociate.</text>
</comment>
<comment type="subunit">
    <text evidence="1">Forms a heterotetramer with UvrB during the search for lesions.</text>
</comment>
<comment type="subcellular location">
    <subcellularLocation>
        <location evidence="1">Cytoplasm</location>
    </subcellularLocation>
</comment>
<comment type="similarity">
    <text evidence="1">Belongs to the ABC transporter superfamily. UvrA family.</text>
</comment>